<name>RHAM_RHIME</name>
<sequence length="104" mass="12154">MEKYAFRMRLHPGKAAEYQARHDAIWPELVTLLKDAGVSDYSIHLDEENCLLFGVLWRSDDHRMGDLPSHPVMRKWWAHMADIMETRADNEPVAVPLKTVFHLK</sequence>
<dbReference type="EC" id="5.1.3.32" evidence="1"/>
<dbReference type="EMBL" id="AL591688">
    <property type="protein sequence ID" value="CAC45206.1"/>
    <property type="molecule type" value="Genomic_DNA"/>
</dbReference>
<dbReference type="RefSeq" id="NP_384740.1">
    <property type="nucleotide sequence ID" value="NC_003047.1"/>
</dbReference>
<dbReference type="RefSeq" id="WP_003529957.1">
    <property type="nucleotide sequence ID" value="NC_003047.1"/>
</dbReference>
<dbReference type="SMR" id="Q92S07"/>
<dbReference type="EnsemblBacteria" id="CAC45206">
    <property type="protein sequence ID" value="CAC45206"/>
    <property type="gene ID" value="SMc03002"/>
</dbReference>
<dbReference type="KEGG" id="sme:SMc03002"/>
<dbReference type="PATRIC" id="fig|266834.11.peg.2006"/>
<dbReference type="eggNOG" id="COG3254">
    <property type="taxonomic scope" value="Bacteria"/>
</dbReference>
<dbReference type="HOGENOM" id="CLU_100689_2_0_5"/>
<dbReference type="OrthoDB" id="9799608at2"/>
<dbReference type="UniPathway" id="UPA00125"/>
<dbReference type="Proteomes" id="UP000001976">
    <property type="component" value="Chromosome"/>
</dbReference>
<dbReference type="GO" id="GO:0005737">
    <property type="term" value="C:cytoplasm"/>
    <property type="evidence" value="ECO:0007669"/>
    <property type="project" value="UniProtKB-SubCell"/>
</dbReference>
<dbReference type="GO" id="GO:0062192">
    <property type="term" value="F:L-rhamnose mutarotase activity"/>
    <property type="evidence" value="ECO:0007669"/>
    <property type="project" value="UniProtKB-EC"/>
</dbReference>
<dbReference type="GO" id="GO:0019301">
    <property type="term" value="P:rhamnose catabolic process"/>
    <property type="evidence" value="ECO:0007669"/>
    <property type="project" value="TreeGrafter"/>
</dbReference>
<dbReference type="Gene3D" id="3.30.70.100">
    <property type="match status" value="1"/>
</dbReference>
<dbReference type="HAMAP" id="MF_01663">
    <property type="entry name" value="L_rham_rotase"/>
    <property type="match status" value="1"/>
</dbReference>
<dbReference type="InterPro" id="IPR011008">
    <property type="entry name" value="Dimeric_a/b-barrel"/>
</dbReference>
<dbReference type="InterPro" id="IPR013448">
    <property type="entry name" value="L-rhamnose_mutarotase"/>
</dbReference>
<dbReference type="InterPro" id="IPR008000">
    <property type="entry name" value="Rham/fucose_mutarotase"/>
</dbReference>
<dbReference type="NCBIfam" id="TIGR02625">
    <property type="entry name" value="YiiL_rotase"/>
    <property type="match status" value="1"/>
</dbReference>
<dbReference type="PANTHER" id="PTHR34389">
    <property type="entry name" value="L-RHAMNOSE MUTAROTASE"/>
    <property type="match status" value="1"/>
</dbReference>
<dbReference type="PANTHER" id="PTHR34389:SF2">
    <property type="entry name" value="L-RHAMNOSE MUTAROTASE"/>
    <property type="match status" value="1"/>
</dbReference>
<dbReference type="Pfam" id="PF05336">
    <property type="entry name" value="rhaM"/>
    <property type="match status" value="1"/>
</dbReference>
<dbReference type="SUPFAM" id="SSF54909">
    <property type="entry name" value="Dimeric alpha+beta barrel"/>
    <property type="match status" value="1"/>
</dbReference>
<protein>
    <recommendedName>
        <fullName evidence="1">L-rhamnose mutarotase</fullName>
        <ecNumber evidence="1">5.1.3.32</ecNumber>
    </recommendedName>
    <alternativeName>
        <fullName evidence="1">Rhamnose 1-epimerase</fullName>
    </alternativeName>
    <alternativeName>
        <fullName evidence="1">Type-3 mutarotase</fullName>
    </alternativeName>
</protein>
<organism>
    <name type="scientific">Rhizobium meliloti (strain 1021)</name>
    <name type="common">Ensifer meliloti</name>
    <name type="synonym">Sinorhizobium meliloti</name>
    <dbReference type="NCBI Taxonomy" id="266834"/>
    <lineage>
        <taxon>Bacteria</taxon>
        <taxon>Pseudomonadati</taxon>
        <taxon>Pseudomonadota</taxon>
        <taxon>Alphaproteobacteria</taxon>
        <taxon>Hyphomicrobiales</taxon>
        <taxon>Rhizobiaceae</taxon>
        <taxon>Sinorhizobium/Ensifer group</taxon>
        <taxon>Sinorhizobium</taxon>
    </lineage>
</organism>
<comment type="function">
    <text evidence="1">Involved in the anomeric conversion of L-rhamnose.</text>
</comment>
<comment type="catalytic activity">
    <reaction evidence="1">
        <text>alpha-L-rhamnose = beta-L-rhamnose</text>
        <dbReference type="Rhea" id="RHEA:25584"/>
        <dbReference type="ChEBI" id="CHEBI:27586"/>
        <dbReference type="ChEBI" id="CHEBI:27907"/>
        <dbReference type="EC" id="5.1.3.32"/>
    </reaction>
</comment>
<comment type="pathway">
    <text evidence="1">Carbohydrate metabolism; L-rhamnose metabolism.</text>
</comment>
<comment type="subunit">
    <text evidence="1">Homodimer.</text>
</comment>
<comment type="subcellular location">
    <subcellularLocation>
        <location evidence="1">Cytoplasm</location>
    </subcellularLocation>
</comment>
<comment type="similarity">
    <text evidence="1">Belongs to the rhamnose mutarotase family.</text>
</comment>
<accession>Q92S07</accession>
<gene>
    <name evidence="1" type="primary">rhaM</name>
    <name type="ordered locus">R00634</name>
    <name type="ORF">SMc03002</name>
</gene>
<evidence type="ECO:0000255" key="1">
    <source>
        <dbReference type="HAMAP-Rule" id="MF_01663"/>
    </source>
</evidence>
<keyword id="KW-0119">Carbohydrate metabolism</keyword>
<keyword id="KW-0963">Cytoplasm</keyword>
<keyword id="KW-0413">Isomerase</keyword>
<keyword id="KW-1185">Reference proteome</keyword>
<keyword id="KW-0684">Rhamnose metabolism</keyword>
<proteinExistence type="inferred from homology"/>
<feature type="chain" id="PRO_0000344596" description="L-rhamnose mutarotase">
    <location>
        <begin position="1"/>
        <end position="104"/>
    </location>
</feature>
<feature type="active site" description="Proton donor" evidence="1">
    <location>
        <position position="22"/>
    </location>
</feature>
<feature type="binding site" evidence="1">
    <location>
        <position position="18"/>
    </location>
    <ligand>
        <name>substrate</name>
    </ligand>
</feature>
<feature type="binding site" evidence="1">
    <location>
        <position position="41"/>
    </location>
    <ligand>
        <name>substrate</name>
    </ligand>
</feature>
<feature type="binding site" evidence="1">
    <location>
        <begin position="76"/>
        <end position="77"/>
    </location>
    <ligand>
        <name>substrate</name>
    </ligand>
</feature>
<reference key="1">
    <citation type="journal article" date="2001" name="Proc. Natl. Acad. Sci. U.S.A.">
        <title>Analysis of the chromosome sequence of the legume symbiont Sinorhizobium meliloti strain 1021.</title>
        <authorList>
            <person name="Capela D."/>
            <person name="Barloy-Hubler F."/>
            <person name="Gouzy J."/>
            <person name="Bothe G."/>
            <person name="Ampe F."/>
            <person name="Batut J."/>
            <person name="Boistard P."/>
            <person name="Becker A."/>
            <person name="Boutry M."/>
            <person name="Cadieu E."/>
            <person name="Dreano S."/>
            <person name="Gloux S."/>
            <person name="Godrie T."/>
            <person name="Goffeau A."/>
            <person name="Kahn D."/>
            <person name="Kiss E."/>
            <person name="Lelaure V."/>
            <person name="Masuy D."/>
            <person name="Pohl T."/>
            <person name="Portetelle D."/>
            <person name="Puehler A."/>
            <person name="Purnelle B."/>
            <person name="Ramsperger U."/>
            <person name="Renard C."/>
            <person name="Thebault P."/>
            <person name="Vandenbol M."/>
            <person name="Weidner S."/>
            <person name="Galibert F."/>
        </authorList>
    </citation>
    <scope>NUCLEOTIDE SEQUENCE [LARGE SCALE GENOMIC DNA]</scope>
    <source>
        <strain>1021</strain>
    </source>
</reference>
<reference key="2">
    <citation type="journal article" date="2001" name="Science">
        <title>The composite genome of the legume symbiont Sinorhizobium meliloti.</title>
        <authorList>
            <person name="Galibert F."/>
            <person name="Finan T.M."/>
            <person name="Long S.R."/>
            <person name="Puehler A."/>
            <person name="Abola P."/>
            <person name="Ampe F."/>
            <person name="Barloy-Hubler F."/>
            <person name="Barnett M.J."/>
            <person name="Becker A."/>
            <person name="Boistard P."/>
            <person name="Bothe G."/>
            <person name="Boutry M."/>
            <person name="Bowser L."/>
            <person name="Buhrmester J."/>
            <person name="Cadieu E."/>
            <person name="Capela D."/>
            <person name="Chain P."/>
            <person name="Cowie A."/>
            <person name="Davis R.W."/>
            <person name="Dreano S."/>
            <person name="Federspiel N.A."/>
            <person name="Fisher R.F."/>
            <person name="Gloux S."/>
            <person name="Godrie T."/>
            <person name="Goffeau A."/>
            <person name="Golding B."/>
            <person name="Gouzy J."/>
            <person name="Gurjal M."/>
            <person name="Hernandez-Lucas I."/>
            <person name="Hong A."/>
            <person name="Huizar L."/>
            <person name="Hyman R.W."/>
            <person name="Jones T."/>
            <person name="Kahn D."/>
            <person name="Kahn M.L."/>
            <person name="Kalman S."/>
            <person name="Keating D.H."/>
            <person name="Kiss E."/>
            <person name="Komp C."/>
            <person name="Lelaure V."/>
            <person name="Masuy D."/>
            <person name="Palm C."/>
            <person name="Peck M.C."/>
            <person name="Pohl T.M."/>
            <person name="Portetelle D."/>
            <person name="Purnelle B."/>
            <person name="Ramsperger U."/>
            <person name="Surzycki R."/>
            <person name="Thebault P."/>
            <person name="Vandenbol M."/>
            <person name="Vorhoelter F.J."/>
            <person name="Weidner S."/>
            <person name="Wells D.H."/>
            <person name="Wong K."/>
            <person name="Yeh K.-C."/>
            <person name="Batut J."/>
        </authorList>
    </citation>
    <scope>NUCLEOTIDE SEQUENCE [LARGE SCALE GENOMIC DNA]</scope>
    <source>
        <strain>1021</strain>
    </source>
</reference>